<keyword id="KW-0030">Aminoacyl-tRNA synthetase</keyword>
<keyword id="KW-0067">ATP-binding</keyword>
<keyword id="KW-0963">Cytoplasm</keyword>
<keyword id="KW-0436">Ligase</keyword>
<keyword id="KW-0547">Nucleotide-binding</keyword>
<keyword id="KW-0648">Protein biosynthesis</keyword>
<sequence>MRLSRYFLPILKENPKEAEIVSHRLMLRSGMIRQQSAGIYSWLPIGLKVLNKVCTIIREEQNRAGANEILMPTIQSADLWRESGRYDAYGKEMLRIQDRQKREMLFGPTNEEMVTDIFRSYVRSYKDLPLNLYHIQWKFRDEVRPRFGVMRSREFLMKDAYSFDLDYEGAKMAYYRMFVSYLRTFARVGLQAIPMRADTGPIGGDLSHEFIILAETGESQVYCDRAYLDLAVPGADTDFRNDAQLTDTVTRWTTPYAATDEMHDEADWAKVKPESQVSARGIEVGHIFHFGTKYSEPMGAKVQGPDGKEHLVSMGSYGIGPSRLVAAAIEASHDDAGIIWPKTIAPFGAGIVNMKPGDEGCDGVSEKLYEALTNAGVDPLLDDKDERPGAKFATIDLIGLPTQVIVGPRGVAAGEVEVKDRKTGERQSLGIEAAINMLTAQA</sequence>
<gene>
    <name evidence="1" type="primary">proS</name>
    <name type="ordered locus">BMEI1140</name>
</gene>
<comment type="function">
    <text evidence="1">Catalyzes the attachment of proline to tRNA(Pro) in a two-step reaction: proline is first activated by ATP to form Pro-AMP and then transferred to the acceptor end of tRNA(Pro).</text>
</comment>
<comment type="catalytic activity">
    <reaction evidence="1">
        <text>tRNA(Pro) + L-proline + ATP = L-prolyl-tRNA(Pro) + AMP + diphosphate</text>
        <dbReference type="Rhea" id="RHEA:14305"/>
        <dbReference type="Rhea" id="RHEA-COMP:9700"/>
        <dbReference type="Rhea" id="RHEA-COMP:9702"/>
        <dbReference type="ChEBI" id="CHEBI:30616"/>
        <dbReference type="ChEBI" id="CHEBI:33019"/>
        <dbReference type="ChEBI" id="CHEBI:60039"/>
        <dbReference type="ChEBI" id="CHEBI:78442"/>
        <dbReference type="ChEBI" id="CHEBI:78532"/>
        <dbReference type="ChEBI" id="CHEBI:456215"/>
        <dbReference type="EC" id="6.1.1.15"/>
    </reaction>
</comment>
<comment type="subunit">
    <text evidence="1">Homodimer.</text>
</comment>
<comment type="subcellular location">
    <subcellularLocation>
        <location evidence="1">Cytoplasm</location>
    </subcellularLocation>
</comment>
<comment type="similarity">
    <text evidence="1">Belongs to the class-II aminoacyl-tRNA synthetase family. ProS type 2 subfamily.</text>
</comment>
<comment type="sequence caution" evidence="2">
    <conflict type="erroneous initiation">
        <sequence resource="EMBL-CDS" id="AAL52321"/>
    </conflict>
</comment>
<feature type="chain" id="PRO_0000248894" description="Proline--tRNA ligase">
    <location>
        <begin position="1"/>
        <end position="442"/>
    </location>
</feature>
<reference key="1">
    <citation type="journal article" date="2002" name="Proc. Natl. Acad. Sci. U.S.A.">
        <title>The genome sequence of the facultative intracellular pathogen Brucella melitensis.</title>
        <authorList>
            <person name="DelVecchio V.G."/>
            <person name="Kapatral V."/>
            <person name="Redkar R.J."/>
            <person name="Patra G."/>
            <person name="Mujer C."/>
            <person name="Los T."/>
            <person name="Ivanova N."/>
            <person name="Anderson I."/>
            <person name="Bhattacharyya A."/>
            <person name="Lykidis A."/>
            <person name="Reznik G."/>
            <person name="Jablonski L."/>
            <person name="Larsen N."/>
            <person name="D'Souza M."/>
            <person name="Bernal A."/>
            <person name="Mazur M."/>
            <person name="Goltsman E."/>
            <person name="Selkov E."/>
            <person name="Elzer P.H."/>
            <person name="Hagius S."/>
            <person name="O'Callaghan D."/>
            <person name="Letesson J.-J."/>
            <person name="Haselkorn R."/>
            <person name="Kyrpides N.C."/>
            <person name="Overbeek R."/>
        </authorList>
    </citation>
    <scope>NUCLEOTIDE SEQUENCE [LARGE SCALE GENOMIC DNA]</scope>
    <source>
        <strain>ATCC 23456 / CCUG 17765 / NCTC 10094 / 16M</strain>
    </source>
</reference>
<name>SYP_BRUME</name>
<proteinExistence type="inferred from homology"/>
<dbReference type="EC" id="6.1.1.15" evidence="1"/>
<dbReference type="EMBL" id="AE008917">
    <property type="protein sequence ID" value="AAL52321.1"/>
    <property type="status" value="ALT_INIT"/>
    <property type="molecule type" value="Genomic_DNA"/>
</dbReference>
<dbReference type="PIR" id="AF3394">
    <property type="entry name" value="AF3394"/>
</dbReference>
<dbReference type="RefSeq" id="WP_004683631.1">
    <property type="nucleotide sequence ID" value="NZ_GG703778.1"/>
</dbReference>
<dbReference type="SMR" id="Q8YGL8"/>
<dbReference type="GeneID" id="29593980"/>
<dbReference type="KEGG" id="bme:BMEI1140"/>
<dbReference type="KEGG" id="bmel:DK63_273"/>
<dbReference type="PATRIC" id="fig|224914.52.peg.282"/>
<dbReference type="eggNOG" id="COG0442">
    <property type="taxonomic scope" value="Bacteria"/>
</dbReference>
<dbReference type="PhylomeDB" id="Q8YGL8"/>
<dbReference type="Proteomes" id="UP000000419">
    <property type="component" value="Chromosome I"/>
</dbReference>
<dbReference type="GO" id="GO:0005829">
    <property type="term" value="C:cytosol"/>
    <property type="evidence" value="ECO:0007669"/>
    <property type="project" value="TreeGrafter"/>
</dbReference>
<dbReference type="GO" id="GO:0005524">
    <property type="term" value="F:ATP binding"/>
    <property type="evidence" value="ECO:0007669"/>
    <property type="project" value="UniProtKB-UniRule"/>
</dbReference>
<dbReference type="GO" id="GO:0004827">
    <property type="term" value="F:proline-tRNA ligase activity"/>
    <property type="evidence" value="ECO:0007669"/>
    <property type="project" value="UniProtKB-UniRule"/>
</dbReference>
<dbReference type="GO" id="GO:0006433">
    <property type="term" value="P:prolyl-tRNA aminoacylation"/>
    <property type="evidence" value="ECO:0007669"/>
    <property type="project" value="UniProtKB-UniRule"/>
</dbReference>
<dbReference type="CDD" id="cd00861">
    <property type="entry name" value="ProRS_anticodon_short"/>
    <property type="match status" value="1"/>
</dbReference>
<dbReference type="CDD" id="cd00779">
    <property type="entry name" value="ProRS_core_prok"/>
    <property type="match status" value="1"/>
</dbReference>
<dbReference type="FunFam" id="3.30.930.10:FF:000042">
    <property type="entry name" value="probable proline--tRNA ligase, mitochondrial"/>
    <property type="match status" value="1"/>
</dbReference>
<dbReference type="Gene3D" id="3.40.50.800">
    <property type="entry name" value="Anticodon-binding domain"/>
    <property type="match status" value="1"/>
</dbReference>
<dbReference type="Gene3D" id="3.30.930.10">
    <property type="entry name" value="Bira Bifunctional Protein, Domain 2"/>
    <property type="match status" value="1"/>
</dbReference>
<dbReference type="HAMAP" id="MF_01570">
    <property type="entry name" value="Pro_tRNA_synth_type2"/>
    <property type="match status" value="1"/>
</dbReference>
<dbReference type="InterPro" id="IPR002314">
    <property type="entry name" value="aa-tRNA-synt_IIb"/>
</dbReference>
<dbReference type="InterPro" id="IPR006195">
    <property type="entry name" value="aa-tRNA-synth_II"/>
</dbReference>
<dbReference type="InterPro" id="IPR045864">
    <property type="entry name" value="aa-tRNA-synth_II/BPL/LPL"/>
</dbReference>
<dbReference type="InterPro" id="IPR004154">
    <property type="entry name" value="Anticodon-bd"/>
</dbReference>
<dbReference type="InterPro" id="IPR036621">
    <property type="entry name" value="Anticodon-bd_dom_sf"/>
</dbReference>
<dbReference type="InterPro" id="IPR002316">
    <property type="entry name" value="Pro-tRNA-ligase_IIa"/>
</dbReference>
<dbReference type="InterPro" id="IPR004500">
    <property type="entry name" value="Pro-tRNA-synth_IIa_bac-type"/>
</dbReference>
<dbReference type="InterPro" id="IPR050062">
    <property type="entry name" value="Pro-tRNA_synthetase"/>
</dbReference>
<dbReference type="InterPro" id="IPR023716">
    <property type="entry name" value="Prolyl-tRNA_ligase_IIa_type2"/>
</dbReference>
<dbReference type="InterPro" id="IPR044140">
    <property type="entry name" value="ProRS_anticodon_short"/>
</dbReference>
<dbReference type="InterPro" id="IPR033730">
    <property type="entry name" value="ProRS_core_prok"/>
</dbReference>
<dbReference type="NCBIfam" id="NF008979">
    <property type="entry name" value="PRK12325.1"/>
    <property type="match status" value="1"/>
</dbReference>
<dbReference type="NCBIfam" id="TIGR00409">
    <property type="entry name" value="proS_fam_II"/>
    <property type="match status" value="1"/>
</dbReference>
<dbReference type="PANTHER" id="PTHR42753">
    <property type="entry name" value="MITOCHONDRIAL RIBOSOME PROTEIN L39/PROLYL-TRNA LIGASE FAMILY MEMBER"/>
    <property type="match status" value="1"/>
</dbReference>
<dbReference type="PANTHER" id="PTHR42753:SF2">
    <property type="entry name" value="PROLINE--TRNA LIGASE"/>
    <property type="match status" value="1"/>
</dbReference>
<dbReference type="Pfam" id="PF03129">
    <property type="entry name" value="HGTP_anticodon"/>
    <property type="match status" value="1"/>
</dbReference>
<dbReference type="Pfam" id="PF00587">
    <property type="entry name" value="tRNA-synt_2b"/>
    <property type="match status" value="1"/>
</dbReference>
<dbReference type="PRINTS" id="PR01046">
    <property type="entry name" value="TRNASYNTHPRO"/>
</dbReference>
<dbReference type="SUPFAM" id="SSF52954">
    <property type="entry name" value="Class II aaRS ABD-related"/>
    <property type="match status" value="1"/>
</dbReference>
<dbReference type="SUPFAM" id="SSF55681">
    <property type="entry name" value="Class II aaRS and biotin synthetases"/>
    <property type="match status" value="1"/>
</dbReference>
<dbReference type="PROSITE" id="PS50862">
    <property type="entry name" value="AA_TRNA_LIGASE_II"/>
    <property type="match status" value="1"/>
</dbReference>
<organism>
    <name type="scientific">Brucella melitensis biotype 1 (strain ATCC 23456 / CCUG 17765 / NCTC 10094 / 16M)</name>
    <dbReference type="NCBI Taxonomy" id="224914"/>
    <lineage>
        <taxon>Bacteria</taxon>
        <taxon>Pseudomonadati</taxon>
        <taxon>Pseudomonadota</taxon>
        <taxon>Alphaproteobacteria</taxon>
        <taxon>Hyphomicrobiales</taxon>
        <taxon>Brucellaceae</taxon>
        <taxon>Brucella/Ochrobactrum group</taxon>
        <taxon>Brucella</taxon>
    </lineage>
</organism>
<accession>Q8YGL8</accession>
<evidence type="ECO:0000255" key="1">
    <source>
        <dbReference type="HAMAP-Rule" id="MF_01570"/>
    </source>
</evidence>
<evidence type="ECO:0000305" key="2"/>
<protein>
    <recommendedName>
        <fullName evidence="1">Proline--tRNA ligase</fullName>
        <ecNumber evidence="1">6.1.1.15</ecNumber>
    </recommendedName>
    <alternativeName>
        <fullName evidence="1">Prolyl-tRNA synthetase</fullName>
        <shortName evidence="1">ProRS</shortName>
    </alternativeName>
</protein>